<sequence>MLIEHLNRQLREREAQSLRRRRRIAETPCAPHQRVSLDGQTASEARELLAFCSNDYLGLANHPALIGALAEGARLWGAGAGASHLISGHTRAHAALEDTLAEWAAPNIPGAKALSFCTGYMANLALLTALGDAEATLFADKLNHASLVDGALLAKAKLQRYAHRQFDVLERQLAACTTPIKLIVTDAVFSMDGDLAELDQLLSLAERFDAWLVIDDAHGFGVLGPKGRGSLAHFGLRSERLILMGTLGKAAGLGGAFVAAHPSVIDWLVQSARAYIYTTAAPPAIAHALSASLALIAGDEGEARRQHLRELIAALRCQLAALIAAQPQLGWRLAESDTAIQPLIVGSNDSALALAAALDAQGLWVPAIRPPTVPVGTARLRITLSAAHSQADVTRLVAALATTARELA</sequence>
<feature type="chain" id="PRO_0000381014" description="8-amino-7-oxononanoate synthase">
    <location>
        <begin position="1"/>
        <end position="408"/>
    </location>
</feature>
<feature type="binding site" evidence="1">
    <location>
        <position position="20"/>
    </location>
    <ligand>
        <name>substrate</name>
    </ligand>
</feature>
<feature type="binding site" evidence="1">
    <location>
        <begin position="119"/>
        <end position="120"/>
    </location>
    <ligand>
        <name>pyridoxal 5'-phosphate</name>
        <dbReference type="ChEBI" id="CHEBI:597326"/>
    </ligand>
</feature>
<feature type="binding site" evidence="1">
    <location>
        <position position="144"/>
    </location>
    <ligand>
        <name>substrate</name>
    </ligand>
</feature>
<feature type="binding site" evidence="1">
    <location>
        <position position="190"/>
    </location>
    <ligand>
        <name>pyridoxal 5'-phosphate</name>
        <dbReference type="ChEBI" id="CHEBI:597326"/>
    </ligand>
</feature>
<feature type="binding site" evidence="1">
    <location>
        <position position="218"/>
    </location>
    <ligand>
        <name>pyridoxal 5'-phosphate</name>
        <dbReference type="ChEBI" id="CHEBI:597326"/>
    </ligand>
</feature>
<feature type="binding site" evidence="1">
    <location>
        <position position="246"/>
    </location>
    <ligand>
        <name>pyridoxal 5'-phosphate</name>
        <dbReference type="ChEBI" id="CHEBI:597326"/>
    </ligand>
</feature>
<feature type="binding site" evidence="1">
    <location>
        <position position="372"/>
    </location>
    <ligand>
        <name>substrate</name>
    </ligand>
</feature>
<feature type="modified residue" description="N6-(pyridoxal phosphate)lysine" evidence="1">
    <location>
        <position position="249"/>
    </location>
</feature>
<evidence type="ECO:0000255" key="1">
    <source>
        <dbReference type="HAMAP-Rule" id="MF_01693"/>
    </source>
</evidence>
<reference key="1">
    <citation type="submission" date="2008-03" db="EMBL/GenBank/DDBJ databases">
        <title>Complete sequence of Leptothrix cholodnii SP-6.</title>
        <authorList>
            <consortium name="US DOE Joint Genome Institute"/>
            <person name="Copeland A."/>
            <person name="Lucas S."/>
            <person name="Lapidus A."/>
            <person name="Glavina del Rio T."/>
            <person name="Dalin E."/>
            <person name="Tice H."/>
            <person name="Bruce D."/>
            <person name="Goodwin L."/>
            <person name="Pitluck S."/>
            <person name="Chertkov O."/>
            <person name="Brettin T."/>
            <person name="Detter J.C."/>
            <person name="Han C."/>
            <person name="Kuske C.R."/>
            <person name="Schmutz J."/>
            <person name="Larimer F."/>
            <person name="Land M."/>
            <person name="Hauser L."/>
            <person name="Kyrpides N."/>
            <person name="Lykidis A."/>
            <person name="Emerson D."/>
            <person name="Richardson P."/>
        </authorList>
    </citation>
    <scope>NUCLEOTIDE SEQUENCE [LARGE SCALE GENOMIC DNA]</scope>
    <source>
        <strain>ATCC 51168 / LMG 8142 / SP-6</strain>
    </source>
</reference>
<dbReference type="EC" id="2.3.1.47" evidence="1"/>
<dbReference type="EMBL" id="CP001013">
    <property type="protein sequence ID" value="ACB35896.1"/>
    <property type="molecule type" value="Genomic_DNA"/>
</dbReference>
<dbReference type="RefSeq" id="WP_012348643.1">
    <property type="nucleotide sequence ID" value="NC_010524.1"/>
</dbReference>
<dbReference type="SMR" id="B1Y500"/>
<dbReference type="STRING" id="395495.Lcho_3642"/>
<dbReference type="KEGG" id="lch:Lcho_3642"/>
<dbReference type="eggNOG" id="COG0156">
    <property type="taxonomic scope" value="Bacteria"/>
</dbReference>
<dbReference type="HOGENOM" id="CLU_015846_11_2_4"/>
<dbReference type="OrthoDB" id="9807157at2"/>
<dbReference type="UniPathway" id="UPA00078"/>
<dbReference type="Proteomes" id="UP000001693">
    <property type="component" value="Chromosome"/>
</dbReference>
<dbReference type="GO" id="GO:0008710">
    <property type="term" value="F:8-amino-7-oxononanoate synthase activity"/>
    <property type="evidence" value="ECO:0007669"/>
    <property type="project" value="UniProtKB-UniRule"/>
</dbReference>
<dbReference type="GO" id="GO:0030170">
    <property type="term" value="F:pyridoxal phosphate binding"/>
    <property type="evidence" value="ECO:0007669"/>
    <property type="project" value="UniProtKB-UniRule"/>
</dbReference>
<dbReference type="GO" id="GO:0009102">
    <property type="term" value="P:biotin biosynthetic process"/>
    <property type="evidence" value="ECO:0007669"/>
    <property type="project" value="UniProtKB-UniRule"/>
</dbReference>
<dbReference type="Gene3D" id="3.90.1150.10">
    <property type="entry name" value="Aspartate Aminotransferase, domain 1"/>
    <property type="match status" value="1"/>
</dbReference>
<dbReference type="Gene3D" id="3.40.640.10">
    <property type="entry name" value="Type I PLP-dependent aspartate aminotransferase-like (Major domain)"/>
    <property type="match status" value="1"/>
</dbReference>
<dbReference type="HAMAP" id="MF_01693">
    <property type="entry name" value="BioF_aminotrans_2"/>
    <property type="match status" value="1"/>
</dbReference>
<dbReference type="InterPro" id="IPR004839">
    <property type="entry name" value="Aminotransferase_I/II_large"/>
</dbReference>
<dbReference type="InterPro" id="IPR050087">
    <property type="entry name" value="AON_synthase_class-II"/>
</dbReference>
<dbReference type="InterPro" id="IPR004723">
    <property type="entry name" value="AONS_Archaea/Proteobacteria"/>
</dbReference>
<dbReference type="InterPro" id="IPR022834">
    <property type="entry name" value="AONS_Proteobacteria"/>
</dbReference>
<dbReference type="InterPro" id="IPR015424">
    <property type="entry name" value="PyrdxlP-dep_Trfase"/>
</dbReference>
<dbReference type="InterPro" id="IPR015421">
    <property type="entry name" value="PyrdxlP-dep_Trfase_major"/>
</dbReference>
<dbReference type="InterPro" id="IPR015422">
    <property type="entry name" value="PyrdxlP-dep_Trfase_small"/>
</dbReference>
<dbReference type="NCBIfam" id="TIGR00858">
    <property type="entry name" value="bioF"/>
    <property type="match status" value="1"/>
</dbReference>
<dbReference type="PANTHER" id="PTHR13693:SF100">
    <property type="entry name" value="8-AMINO-7-OXONONANOATE SYNTHASE"/>
    <property type="match status" value="1"/>
</dbReference>
<dbReference type="PANTHER" id="PTHR13693">
    <property type="entry name" value="CLASS II AMINOTRANSFERASE/8-AMINO-7-OXONONANOATE SYNTHASE"/>
    <property type="match status" value="1"/>
</dbReference>
<dbReference type="Pfam" id="PF00155">
    <property type="entry name" value="Aminotran_1_2"/>
    <property type="match status" value="1"/>
</dbReference>
<dbReference type="SUPFAM" id="SSF53383">
    <property type="entry name" value="PLP-dependent transferases"/>
    <property type="match status" value="1"/>
</dbReference>
<protein>
    <recommendedName>
        <fullName evidence="1">8-amino-7-oxononanoate synthase</fullName>
        <shortName evidence="1">AONS</shortName>
        <ecNumber evidence="1">2.3.1.47</ecNumber>
    </recommendedName>
    <alternativeName>
        <fullName evidence="1">7-keto-8-amino-pelargonic acid synthase</fullName>
        <shortName evidence="1">7-KAP synthase</shortName>
        <shortName evidence="1">KAPA synthase</shortName>
    </alternativeName>
    <alternativeName>
        <fullName evidence="1">8-amino-7-ketopelargonate synthase</fullName>
    </alternativeName>
</protein>
<accession>B1Y500</accession>
<gene>
    <name evidence="1" type="primary">bioF</name>
    <name type="ordered locus">Lcho_3642</name>
</gene>
<proteinExistence type="inferred from homology"/>
<organism>
    <name type="scientific">Leptothrix cholodnii (strain ATCC 51168 / LMG 8142 / SP-6)</name>
    <name type="common">Leptothrix discophora (strain SP-6)</name>
    <dbReference type="NCBI Taxonomy" id="395495"/>
    <lineage>
        <taxon>Bacteria</taxon>
        <taxon>Pseudomonadati</taxon>
        <taxon>Pseudomonadota</taxon>
        <taxon>Betaproteobacteria</taxon>
        <taxon>Burkholderiales</taxon>
        <taxon>Sphaerotilaceae</taxon>
        <taxon>Leptothrix</taxon>
    </lineage>
</organism>
<comment type="function">
    <text evidence="1">Catalyzes the decarboxylative condensation of pimeloyl-[acyl-carrier protein] and L-alanine to produce 8-amino-7-oxononanoate (AON), [acyl-carrier protein], and carbon dioxide.</text>
</comment>
<comment type="catalytic activity">
    <reaction evidence="1">
        <text>6-carboxyhexanoyl-[ACP] + L-alanine + H(+) = (8S)-8-amino-7-oxononanoate + holo-[ACP] + CO2</text>
        <dbReference type="Rhea" id="RHEA:42288"/>
        <dbReference type="Rhea" id="RHEA-COMP:9685"/>
        <dbReference type="Rhea" id="RHEA-COMP:9955"/>
        <dbReference type="ChEBI" id="CHEBI:15378"/>
        <dbReference type="ChEBI" id="CHEBI:16526"/>
        <dbReference type="ChEBI" id="CHEBI:57972"/>
        <dbReference type="ChEBI" id="CHEBI:64479"/>
        <dbReference type="ChEBI" id="CHEBI:78846"/>
        <dbReference type="ChEBI" id="CHEBI:149468"/>
        <dbReference type="EC" id="2.3.1.47"/>
    </reaction>
</comment>
<comment type="cofactor">
    <cofactor evidence="1">
        <name>pyridoxal 5'-phosphate</name>
        <dbReference type="ChEBI" id="CHEBI:597326"/>
    </cofactor>
</comment>
<comment type="pathway">
    <text evidence="1">Cofactor biosynthesis; biotin biosynthesis.</text>
</comment>
<comment type="subunit">
    <text evidence="1">Homodimer.</text>
</comment>
<comment type="similarity">
    <text evidence="1">Belongs to the class-II pyridoxal-phosphate-dependent aminotransferase family. BioF subfamily.</text>
</comment>
<keyword id="KW-0093">Biotin biosynthesis</keyword>
<keyword id="KW-0663">Pyridoxal phosphate</keyword>
<keyword id="KW-1185">Reference proteome</keyword>
<keyword id="KW-0808">Transferase</keyword>
<name>BIOF_LEPCP</name>